<gene>
    <name evidence="1" type="primary">xseA</name>
    <name type="ordered locus">CLL_A2404</name>
</gene>
<protein>
    <recommendedName>
        <fullName evidence="1">Exodeoxyribonuclease 7 large subunit</fullName>
        <ecNumber evidence="1">3.1.11.6</ecNumber>
    </recommendedName>
    <alternativeName>
        <fullName evidence="1">Exodeoxyribonuclease VII large subunit</fullName>
        <shortName evidence="1">Exonuclease VII large subunit</shortName>
    </alternativeName>
</protein>
<sequence>MKIKTLTVSDLTNYIKKVIDNDFILNNLSVKGEISNLKFHSSGHIYFSLKDNNSKVNCVMFKSKASLLNIALEDGMEVMVKGRASIYTATGSFQLYCDEIKKEGQGELFIKFEALKEKLSKSGYFDEKYKKNIPMYAKRIGIVTSSTGAVIRDIINVTKRRNSLVDIILYPAKVQGDNAYKEIIAGIEYFNKKKNIDIIIVGRGGGSIEELWNFNEEELAKVIFNSKLPIISAVGHEVDFTISDFVSDVRAATPSQAAEIAVPLLSDINTRIYEISKSLDYEIQKKLKDCKSRLESNERILKLHSPISKIVNSYLEIDKLKDRLYFAIDIKIKREKQKIESLNNLLSANNPIKVLNKGYAIIEDENNNIIKEISQLNEEKEISVSLSDGNIKGNFIPIK</sequence>
<name>EX7L_CLOBB</name>
<reference key="1">
    <citation type="submission" date="2008-04" db="EMBL/GenBank/DDBJ databases">
        <title>Complete sequence of Clostridium botulinum strain Eklund.</title>
        <authorList>
            <person name="Brinkac L.M."/>
            <person name="Brown J.L."/>
            <person name="Bruce D."/>
            <person name="Detter C."/>
            <person name="Munk C."/>
            <person name="Smith L.A."/>
            <person name="Smith T.J."/>
            <person name="Sutton G."/>
            <person name="Brettin T.S."/>
        </authorList>
    </citation>
    <scope>NUCLEOTIDE SEQUENCE [LARGE SCALE GENOMIC DNA]</scope>
    <source>
        <strain>Eklund 17B / Type B</strain>
    </source>
</reference>
<keyword id="KW-0963">Cytoplasm</keyword>
<keyword id="KW-0269">Exonuclease</keyword>
<keyword id="KW-0378">Hydrolase</keyword>
<keyword id="KW-0540">Nuclease</keyword>
<organism>
    <name type="scientific">Clostridium botulinum (strain Eklund 17B / Type B)</name>
    <dbReference type="NCBI Taxonomy" id="935198"/>
    <lineage>
        <taxon>Bacteria</taxon>
        <taxon>Bacillati</taxon>
        <taxon>Bacillota</taxon>
        <taxon>Clostridia</taxon>
        <taxon>Eubacteriales</taxon>
        <taxon>Clostridiaceae</taxon>
        <taxon>Clostridium</taxon>
    </lineage>
</organism>
<accession>B2TRM8</accession>
<evidence type="ECO:0000255" key="1">
    <source>
        <dbReference type="HAMAP-Rule" id="MF_00378"/>
    </source>
</evidence>
<comment type="function">
    <text evidence="1">Bidirectionally degrades single-stranded DNA into large acid-insoluble oligonucleotides, which are then degraded further into small acid-soluble oligonucleotides.</text>
</comment>
<comment type="catalytic activity">
    <reaction evidence="1">
        <text>Exonucleolytic cleavage in either 5'- to 3'- or 3'- to 5'-direction to yield nucleoside 5'-phosphates.</text>
        <dbReference type="EC" id="3.1.11.6"/>
    </reaction>
</comment>
<comment type="subunit">
    <text evidence="1">Heterooligomer composed of large and small subunits.</text>
</comment>
<comment type="subcellular location">
    <subcellularLocation>
        <location evidence="1">Cytoplasm</location>
    </subcellularLocation>
</comment>
<comment type="similarity">
    <text evidence="1">Belongs to the XseA family.</text>
</comment>
<proteinExistence type="inferred from homology"/>
<feature type="chain" id="PRO_1000122049" description="Exodeoxyribonuclease 7 large subunit">
    <location>
        <begin position="1"/>
        <end position="399"/>
    </location>
</feature>
<dbReference type="EC" id="3.1.11.6" evidence="1"/>
<dbReference type="EMBL" id="CP001056">
    <property type="protein sequence ID" value="ACD24147.1"/>
    <property type="molecule type" value="Genomic_DNA"/>
</dbReference>
<dbReference type="SMR" id="B2TRM8"/>
<dbReference type="KEGG" id="cbk:CLL_A2404"/>
<dbReference type="PATRIC" id="fig|935198.13.peg.2362"/>
<dbReference type="HOGENOM" id="CLU_023625_3_1_9"/>
<dbReference type="Proteomes" id="UP000001195">
    <property type="component" value="Chromosome"/>
</dbReference>
<dbReference type="GO" id="GO:0005737">
    <property type="term" value="C:cytoplasm"/>
    <property type="evidence" value="ECO:0007669"/>
    <property type="project" value="UniProtKB-SubCell"/>
</dbReference>
<dbReference type="GO" id="GO:0009318">
    <property type="term" value="C:exodeoxyribonuclease VII complex"/>
    <property type="evidence" value="ECO:0007669"/>
    <property type="project" value="InterPro"/>
</dbReference>
<dbReference type="GO" id="GO:0008855">
    <property type="term" value="F:exodeoxyribonuclease VII activity"/>
    <property type="evidence" value="ECO:0007669"/>
    <property type="project" value="UniProtKB-UniRule"/>
</dbReference>
<dbReference type="GO" id="GO:0003676">
    <property type="term" value="F:nucleic acid binding"/>
    <property type="evidence" value="ECO:0007669"/>
    <property type="project" value="InterPro"/>
</dbReference>
<dbReference type="GO" id="GO:0006308">
    <property type="term" value="P:DNA catabolic process"/>
    <property type="evidence" value="ECO:0007669"/>
    <property type="project" value="UniProtKB-UniRule"/>
</dbReference>
<dbReference type="CDD" id="cd04489">
    <property type="entry name" value="ExoVII_LU_OBF"/>
    <property type="match status" value="1"/>
</dbReference>
<dbReference type="HAMAP" id="MF_00378">
    <property type="entry name" value="Exonuc_7_L"/>
    <property type="match status" value="1"/>
</dbReference>
<dbReference type="InterPro" id="IPR003753">
    <property type="entry name" value="Exonuc_VII_L"/>
</dbReference>
<dbReference type="InterPro" id="IPR020579">
    <property type="entry name" value="Exonuc_VII_lsu_C"/>
</dbReference>
<dbReference type="InterPro" id="IPR025824">
    <property type="entry name" value="OB-fold_nuc-bd_dom"/>
</dbReference>
<dbReference type="NCBIfam" id="TIGR00237">
    <property type="entry name" value="xseA"/>
    <property type="match status" value="1"/>
</dbReference>
<dbReference type="PANTHER" id="PTHR30008">
    <property type="entry name" value="EXODEOXYRIBONUCLEASE 7 LARGE SUBUNIT"/>
    <property type="match status" value="1"/>
</dbReference>
<dbReference type="PANTHER" id="PTHR30008:SF0">
    <property type="entry name" value="EXODEOXYRIBONUCLEASE 7 LARGE SUBUNIT"/>
    <property type="match status" value="1"/>
</dbReference>
<dbReference type="Pfam" id="PF02601">
    <property type="entry name" value="Exonuc_VII_L"/>
    <property type="match status" value="2"/>
</dbReference>
<dbReference type="Pfam" id="PF13742">
    <property type="entry name" value="tRNA_anti_2"/>
    <property type="match status" value="1"/>
</dbReference>